<gene>
    <name evidence="6" type="primary">glnK1</name>
    <name evidence="8" type="ordered locus">AF_0978</name>
</gene>
<comment type="function">
    <text evidence="3">Involved in the regulation of nitrogen metabolism (By similarity). Regulates the activity of its targets by protein-protein interaction in response to the nitrogen status of the cell (By similarity). Regulates the activity of the ammonia channel Amt1 via direct interaction (By similarity).</text>
</comment>
<comment type="subunit">
    <text evidence="3 5">Homotrimer (PubMed:21301082). Interacts and forms a complex with Amt1 (By similarity).</text>
</comment>
<comment type="subcellular location">
    <subcellularLocation>
        <location evidence="1">Cytoplasm</location>
    </subcellularLocation>
</comment>
<comment type="similarity">
    <text evidence="4">Belongs to the P(II) protein family.</text>
</comment>
<sequence>MRRLPTREVVEMKMVVAVIRPEKLECVKKALEERGFVGMTVTEVKGRGEQKGIRLQFRGREVEVDLLQKTKVEVVVSDDAVDEVVEAIVSSARTGKFGDGRIFVIPVEKSVKIRTGEEEV</sequence>
<evidence type="ECO:0000250" key="1">
    <source>
        <dbReference type="UniProtKB" id="B8ZYW0"/>
    </source>
</evidence>
<evidence type="ECO:0000250" key="2">
    <source>
        <dbReference type="UniProtKB" id="O28524"/>
    </source>
</evidence>
<evidence type="ECO:0000250" key="3">
    <source>
        <dbReference type="UniProtKB" id="Q60381"/>
    </source>
</evidence>
<evidence type="ECO:0000255" key="4">
    <source>
        <dbReference type="PROSITE-ProRule" id="PRU00675"/>
    </source>
</evidence>
<evidence type="ECO:0000269" key="5">
    <source>
    </source>
</evidence>
<evidence type="ECO:0000303" key="6">
    <source>
    </source>
</evidence>
<evidence type="ECO:0000305" key="7"/>
<evidence type="ECO:0000312" key="8">
    <source>
        <dbReference type="EMBL" id="AAB90263.1"/>
    </source>
</evidence>
<evidence type="ECO:0007744" key="9">
    <source>
        <dbReference type="PDB" id="3O8W"/>
    </source>
</evidence>
<evidence type="ECO:0007829" key="10">
    <source>
        <dbReference type="PDB" id="3O8W"/>
    </source>
</evidence>
<name>GLNK1_ARCFU</name>
<keyword id="KW-0002">3D-structure</keyword>
<keyword id="KW-0067">ATP-binding</keyword>
<keyword id="KW-0963">Cytoplasm</keyword>
<keyword id="KW-0547">Nucleotide-binding</keyword>
<keyword id="KW-1185">Reference proteome</keyword>
<dbReference type="EMBL" id="AE000782">
    <property type="protein sequence ID" value="AAB90263.1"/>
    <property type="molecule type" value="Genomic_DNA"/>
</dbReference>
<dbReference type="PIR" id="B69372">
    <property type="entry name" value="B69372"/>
</dbReference>
<dbReference type="PDB" id="3O8W">
    <property type="method" value="X-ray"/>
    <property type="resolution" value="2.28 A"/>
    <property type="chains" value="A=12-120"/>
</dbReference>
<dbReference type="PDBsum" id="3O8W"/>
<dbReference type="SMR" id="O29284"/>
<dbReference type="STRING" id="224325.AF_0978"/>
<dbReference type="PaxDb" id="224325-AF_0978"/>
<dbReference type="EnsemblBacteria" id="AAB90263">
    <property type="protein sequence ID" value="AAB90263"/>
    <property type="gene ID" value="AF_0978"/>
</dbReference>
<dbReference type="KEGG" id="afu:AF_0978"/>
<dbReference type="eggNOG" id="arCOG02305">
    <property type="taxonomic scope" value="Archaea"/>
</dbReference>
<dbReference type="HOGENOM" id="CLU_082268_0_1_2"/>
<dbReference type="PhylomeDB" id="O29284"/>
<dbReference type="EvolutionaryTrace" id="O29284"/>
<dbReference type="Proteomes" id="UP000002199">
    <property type="component" value="Chromosome"/>
</dbReference>
<dbReference type="GO" id="GO:0005829">
    <property type="term" value="C:cytosol"/>
    <property type="evidence" value="ECO:0007669"/>
    <property type="project" value="TreeGrafter"/>
</dbReference>
<dbReference type="GO" id="GO:0005524">
    <property type="term" value="F:ATP binding"/>
    <property type="evidence" value="ECO:0007669"/>
    <property type="project" value="UniProtKB-KW"/>
</dbReference>
<dbReference type="GO" id="GO:0030234">
    <property type="term" value="F:enzyme regulator activity"/>
    <property type="evidence" value="ECO:0007669"/>
    <property type="project" value="InterPro"/>
</dbReference>
<dbReference type="GO" id="GO:0006808">
    <property type="term" value="P:regulation of nitrogen utilization"/>
    <property type="evidence" value="ECO:0007669"/>
    <property type="project" value="InterPro"/>
</dbReference>
<dbReference type="Gene3D" id="3.30.70.120">
    <property type="match status" value="1"/>
</dbReference>
<dbReference type="InterPro" id="IPR002187">
    <property type="entry name" value="N-reg_PII"/>
</dbReference>
<dbReference type="InterPro" id="IPR011322">
    <property type="entry name" value="N-reg_PII-like_a/b"/>
</dbReference>
<dbReference type="InterPro" id="IPR015867">
    <property type="entry name" value="N-reg_PII/ATP_PRibTrfase_C"/>
</dbReference>
<dbReference type="InterPro" id="IPR017918">
    <property type="entry name" value="N-reg_PII_CS"/>
</dbReference>
<dbReference type="PANTHER" id="PTHR30115">
    <property type="entry name" value="NITROGEN REGULATORY PROTEIN P-II"/>
    <property type="match status" value="1"/>
</dbReference>
<dbReference type="PANTHER" id="PTHR30115:SF11">
    <property type="entry name" value="NITROGEN REGULATORY PROTEIN P-II HOMOLOG"/>
    <property type="match status" value="1"/>
</dbReference>
<dbReference type="Pfam" id="PF00543">
    <property type="entry name" value="P-II"/>
    <property type="match status" value="1"/>
</dbReference>
<dbReference type="PRINTS" id="PR00340">
    <property type="entry name" value="PIIGLNB"/>
</dbReference>
<dbReference type="SMART" id="SM00938">
    <property type="entry name" value="P-II"/>
    <property type="match status" value="1"/>
</dbReference>
<dbReference type="SUPFAM" id="SSF54913">
    <property type="entry name" value="GlnB-like"/>
    <property type="match status" value="1"/>
</dbReference>
<dbReference type="PROSITE" id="PS00638">
    <property type="entry name" value="PII_GLNB_CTER"/>
    <property type="match status" value="1"/>
</dbReference>
<dbReference type="PROSITE" id="PS51343">
    <property type="entry name" value="PII_GLNB_DOM"/>
    <property type="match status" value="1"/>
</dbReference>
<organism>
    <name type="scientific">Archaeoglobus fulgidus (strain ATCC 49558 / DSM 4304 / JCM 9628 / NBRC 100126 / VC-16)</name>
    <dbReference type="NCBI Taxonomy" id="224325"/>
    <lineage>
        <taxon>Archaea</taxon>
        <taxon>Methanobacteriati</taxon>
        <taxon>Methanobacteriota</taxon>
        <taxon>Archaeoglobi</taxon>
        <taxon>Archaeoglobales</taxon>
        <taxon>Archaeoglobaceae</taxon>
        <taxon>Archaeoglobus</taxon>
    </lineage>
</organism>
<reference key="1">
    <citation type="journal article" date="1997" name="Nature">
        <title>The complete genome sequence of the hyperthermophilic, sulphate-reducing archaeon Archaeoglobus fulgidus.</title>
        <authorList>
            <person name="Klenk H.-P."/>
            <person name="Clayton R.A."/>
            <person name="Tomb J.-F."/>
            <person name="White O."/>
            <person name="Nelson K.E."/>
            <person name="Ketchum K.A."/>
            <person name="Dodson R.J."/>
            <person name="Gwinn M.L."/>
            <person name="Hickey E.K."/>
            <person name="Peterson J.D."/>
            <person name="Richardson D.L."/>
            <person name="Kerlavage A.R."/>
            <person name="Graham D.E."/>
            <person name="Kyrpides N.C."/>
            <person name="Fleischmann R.D."/>
            <person name="Quackenbush J."/>
            <person name="Lee N.H."/>
            <person name="Sutton G.G."/>
            <person name="Gill S.R."/>
            <person name="Kirkness E.F."/>
            <person name="Dougherty B.A."/>
            <person name="McKenney K."/>
            <person name="Adams M.D."/>
            <person name="Loftus B.J."/>
            <person name="Peterson S.N."/>
            <person name="Reich C.I."/>
            <person name="McNeil L.K."/>
            <person name="Badger J.H."/>
            <person name="Glodek A."/>
            <person name="Zhou L."/>
            <person name="Overbeek R."/>
            <person name="Gocayne J.D."/>
            <person name="Weidman J.F."/>
            <person name="McDonald L.A."/>
            <person name="Utterback T.R."/>
            <person name="Cotton M.D."/>
            <person name="Spriggs T."/>
            <person name="Artiach P."/>
            <person name="Kaine B.P."/>
            <person name="Sykes S.M."/>
            <person name="Sadow P.W."/>
            <person name="D'Andrea K.P."/>
            <person name="Bowman C."/>
            <person name="Fujii C."/>
            <person name="Garland S.A."/>
            <person name="Mason T.M."/>
            <person name="Olsen G.J."/>
            <person name="Fraser C.M."/>
            <person name="Smith H.O."/>
            <person name="Woese C.R."/>
            <person name="Venter J.C."/>
        </authorList>
    </citation>
    <scope>NUCLEOTIDE SEQUENCE [LARGE SCALE GENOMIC DNA]</scope>
    <source>
        <strain>ATCC 49558 / DSM 4304 / JCM 9628 / NBRC 100126 / VC-16</strain>
    </source>
</reference>
<reference evidence="9" key="2">
    <citation type="journal article" date="2011" name="Acta Crystallogr. F Struct. Biol. Commun.">
        <title>Structure of GlnK1, a signalling protein from Archaeoglobus fulgidus.</title>
        <authorList>
            <person name="Litz C."/>
            <person name="Helfmann S."/>
            <person name="Gerhardt S."/>
            <person name="Andrade S.L."/>
        </authorList>
    </citation>
    <scope>X-RAY CRYSTALLOGRAPHY (2.28 ANGSTROMS) OF 12-120</scope>
    <scope>SUBUNIT</scope>
</reference>
<protein>
    <recommendedName>
        <fullName evidence="7">Nitrogen regulatory protein GlnK1</fullName>
    </recommendedName>
</protein>
<proteinExistence type="evidence at protein level"/>
<feature type="chain" id="PRO_0000453012" description="Nitrogen regulatory protein GlnK1">
    <location>
        <begin position="1"/>
        <end position="120"/>
    </location>
</feature>
<feature type="binding site" evidence="2">
    <location>
        <position position="40"/>
    </location>
    <ligand>
        <name>ADP</name>
        <dbReference type="ChEBI" id="CHEBI:456216"/>
    </ligand>
</feature>
<feature type="binding site" evidence="2">
    <location>
        <position position="40"/>
    </location>
    <ligand>
        <name>ATP</name>
        <dbReference type="ChEBI" id="CHEBI:30616"/>
    </ligand>
</feature>
<feature type="binding site" evidence="2">
    <location>
        <begin position="48"/>
        <end position="50"/>
    </location>
    <ligand>
        <name>ADP</name>
        <dbReference type="ChEBI" id="CHEBI:456216"/>
    </ligand>
</feature>
<feature type="binding site" evidence="2">
    <location>
        <begin position="48"/>
        <end position="50"/>
    </location>
    <ligand>
        <name>ATP</name>
        <dbReference type="ChEBI" id="CHEBI:30616"/>
    </ligand>
</feature>
<feature type="binding site" evidence="2">
    <location>
        <position position="75"/>
    </location>
    <ligand>
        <name>ADP</name>
        <dbReference type="ChEBI" id="CHEBI:456216"/>
    </ligand>
</feature>
<feature type="binding site" evidence="2">
    <location>
        <position position="75"/>
    </location>
    <ligand>
        <name>ATP</name>
        <dbReference type="ChEBI" id="CHEBI:30616"/>
    </ligand>
</feature>
<feature type="binding site" evidence="2">
    <location>
        <begin position="98"/>
        <end position="101"/>
    </location>
    <ligand>
        <name>ADP</name>
        <dbReference type="ChEBI" id="CHEBI:456216"/>
    </ligand>
</feature>
<feature type="binding site" evidence="2">
    <location>
        <begin position="98"/>
        <end position="101"/>
    </location>
    <ligand>
        <name>ATP</name>
        <dbReference type="ChEBI" id="CHEBI:30616"/>
    </ligand>
</feature>
<feature type="strand" evidence="10">
    <location>
        <begin position="13"/>
        <end position="19"/>
    </location>
</feature>
<feature type="helix" evidence="10">
    <location>
        <begin position="21"/>
        <end position="23"/>
    </location>
</feature>
<feature type="helix" evidence="10">
    <location>
        <begin position="24"/>
        <end position="32"/>
    </location>
</feature>
<feature type="turn" evidence="10">
    <location>
        <begin position="33"/>
        <end position="35"/>
    </location>
</feature>
<feature type="strand" evidence="10">
    <location>
        <begin position="40"/>
        <end position="46"/>
    </location>
</feature>
<feature type="strand" evidence="10">
    <location>
        <begin position="67"/>
        <end position="76"/>
    </location>
</feature>
<feature type="helix" evidence="10">
    <location>
        <begin position="78"/>
        <end position="80"/>
    </location>
</feature>
<feature type="helix" evidence="10">
    <location>
        <begin position="81"/>
        <end position="92"/>
    </location>
</feature>
<feature type="strand" evidence="10">
    <location>
        <begin position="101"/>
        <end position="106"/>
    </location>
</feature>
<feature type="strand" evidence="10">
    <location>
        <begin position="108"/>
        <end position="111"/>
    </location>
</feature>
<feature type="turn" evidence="10">
    <location>
        <begin position="113"/>
        <end position="115"/>
    </location>
</feature>
<feature type="strand" evidence="10">
    <location>
        <begin position="118"/>
        <end position="120"/>
    </location>
</feature>
<accession>O29284</accession>